<accession>P9WMF4</accession>
<accession>L0TB04</accession>
<accession>P67665</accession>
<accession>Q10872</accession>
<reference key="1">
    <citation type="journal article" date="2002" name="J. Bacteriol.">
        <title>Whole-genome comparison of Mycobacterium tuberculosis clinical and laboratory strains.</title>
        <authorList>
            <person name="Fleischmann R.D."/>
            <person name="Alland D."/>
            <person name="Eisen J.A."/>
            <person name="Carpenter L."/>
            <person name="White O."/>
            <person name="Peterson J.D."/>
            <person name="DeBoy R.T."/>
            <person name="Dodson R.J."/>
            <person name="Gwinn M.L."/>
            <person name="Haft D.H."/>
            <person name="Hickey E.K."/>
            <person name="Kolonay J.F."/>
            <person name="Nelson W.C."/>
            <person name="Umayam L.A."/>
            <person name="Ermolaeva M.D."/>
            <person name="Salzberg S.L."/>
            <person name="Delcher A."/>
            <person name="Utterback T.R."/>
            <person name="Weidman J.F."/>
            <person name="Khouri H.M."/>
            <person name="Gill J."/>
            <person name="Mikula A."/>
            <person name="Bishai W."/>
            <person name="Jacobs W.R. Jr."/>
            <person name="Venter J.C."/>
            <person name="Fraser C.M."/>
        </authorList>
    </citation>
    <scope>NUCLEOTIDE SEQUENCE [LARGE SCALE GENOMIC DNA]</scope>
    <source>
        <strain>CDC 1551 / Oshkosh</strain>
    </source>
</reference>
<organism>
    <name type="scientific">Mycobacterium tuberculosis (strain CDC 1551 / Oshkosh)</name>
    <dbReference type="NCBI Taxonomy" id="83331"/>
    <lineage>
        <taxon>Bacteria</taxon>
        <taxon>Bacillati</taxon>
        <taxon>Actinomycetota</taxon>
        <taxon>Actinomycetes</taxon>
        <taxon>Mycobacteriales</taxon>
        <taxon>Mycobacteriaceae</taxon>
        <taxon>Mycobacterium</taxon>
        <taxon>Mycobacterium tuberculosis complex</taxon>
    </lineage>
</organism>
<protein>
    <recommendedName>
        <fullName evidence="1">HTH-type transcriptional regulator LysG</fullName>
    </recommendedName>
</protein>
<name>LYSG_MYCTO</name>
<gene>
    <name evidence="1" type="primary">lysG</name>
    <name type="ordered locus">MT2039</name>
</gene>
<keyword id="KW-0010">Activator</keyword>
<keyword id="KW-0238">DNA-binding</keyword>
<keyword id="KW-1185">Reference proteome</keyword>
<keyword id="KW-0678">Repressor</keyword>
<keyword id="KW-0804">Transcription</keyword>
<keyword id="KW-0805">Transcription regulation</keyword>
<evidence type="ECO:0000250" key="1">
    <source>
        <dbReference type="UniProtKB" id="P9WMF5"/>
    </source>
</evidence>
<evidence type="ECO:0000255" key="2">
    <source>
        <dbReference type="PROSITE-ProRule" id="PRU00253"/>
    </source>
</evidence>
<evidence type="ECO:0000305" key="3"/>
<feature type="chain" id="PRO_0000427313" description="HTH-type transcriptional regulator LysG">
    <location>
        <begin position="1"/>
        <end position="303"/>
    </location>
</feature>
<feature type="domain" description="HTH lysR-type" evidence="2">
    <location>
        <begin position="6"/>
        <end position="62"/>
    </location>
</feature>
<feature type="DNA-binding region" description="H-T-H motif" evidence="2">
    <location>
        <begin position="23"/>
        <end position="42"/>
    </location>
</feature>
<comment type="function">
    <text evidence="1">Positively regulates the expression of the exporter LysE and represses its own expression.</text>
</comment>
<comment type="subunit">
    <text evidence="1">Homodimer.</text>
</comment>
<comment type="similarity">
    <text evidence="3">Belongs to the LysR transcriptional regulatory family.</text>
</comment>
<sequence length="303" mass="32837">MVDPQLDGPQLAALAAVVELGSFDAAAERLHVTPSAVSQRIKSLEQQVGQVLVVREKPCRATTAGIPLLRLAAQTALLESEALAEMGGNASLKRTRITIAVNADSMATWFSAVFDGLGDVLLDVRIEDQDHSARLLREGVAMGAVTTERNPVPGCRVHPLGEMRYLPVASRPFVQRHLSDGFTAAAAAKAPSLAWNRDDGLQDMLVRKAFRRAITRPTHFVPTTEGFTAAARAGLGWGMFPEKLAASPLADGSFVRVCDIHLDVPLYWQCWKLDSPIIARITDTVRAAASGLYRGQQRRRRPG</sequence>
<proteinExistence type="inferred from homology"/>
<dbReference type="EMBL" id="AE000516">
    <property type="protein sequence ID" value="AAK46314.1"/>
    <property type="molecule type" value="Genomic_DNA"/>
</dbReference>
<dbReference type="PIR" id="G70756">
    <property type="entry name" value="G70756"/>
</dbReference>
<dbReference type="RefSeq" id="WP_003409986.1">
    <property type="nucleotide sequence ID" value="NZ_KK341227.1"/>
</dbReference>
<dbReference type="SMR" id="P9WMF4"/>
<dbReference type="KEGG" id="mtc:MT2039"/>
<dbReference type="PATRIC" id="fig|83331.31.peg.2195"/>
<dbReference type="HOGENOM" id="CLU_063829_0_1_11"/>
<dbReference type="Proteomes" id="UP000001020">
    <property type="component" value="Chromosome"/>
</dbReference>
<dbReference type="GO" id="GO:0003677">
    <property type="term" value="F:DNA binding"/>
    <property type="evidence" value="ECO:0007669"/>
    <property type="project" value="UniProtKB-KW"/>
</dbReference>
<dbReference type="GO" id="GO:0003700">
    <property type="term" value="F:DNA-binding transcription factor activity"/>
    <property type="evidence" value="ECO:0007669"/>
    <property type="project" value="InterPro"/>
</dbReference>
<dbReference type="FunFam" id="1.10.10.10:FF:000456">
    <property type="entry name" value="LysR family transcriptional regulator ArgP"/>
    <property type="match status" value="1"/>
</dbReference>
<dbReference type="Gene3D" id="3.40.190.290">
    <property type="match status" value="1"/>
</dbReference>
<dbReference type="Gene3D" id="1.10.10.10">
    <property type="entry name" value="Winged helix-like DNA-binding domain superfamily/Winged helix DNA-binding domain"/>
    <property type="match status" value="1"/>
</dbReference>
<dbReference type="InterPro" id="IPR017685">
    <property type="entry name" value="ArgP"/>
</dbReference>
<dbReference type="InterPro" id="IPR050176">
    <property type="entry name" value="LTTR"/>
</dbReference>
<dbReference type="InterPro" id="IPR005119">
    <property type="entry name" value="LysR_subst-bd"/>
</dbReference>
<dbReference type="InterPro" id="IPR000847">
    <property type="entry name" value="Tscrpt_reg_HTH_LysR"/>
</dbReference>
<dbReference type="InterPro" id="IPR036388">
    <property type="entry name" value="WH-like_DNA-bd_sf"/>
</dbReference>
<dbReference type="InterPro" id="IPR036390">
    <property type="entry name" value="WH_DNA-bd_sf"/>
</dbReference>
<dbReference type="NCBIfam" id="TIGR03298">
    <property type="entry name" value="argP"/>
    <property type="match status" value="1"/>
</dbReference>
<dbReference type="NCBIfam" id="NF002964">
    <property type="entry name" value="PRK03635.1"/>
    <property type="match status" value="1"/>
</dbReference>
<dbReference type="NCBIfam" id="NF009888">
    <property type="entry name" value="PRK13348.1"/>
    <property type="match status" value="1"/>
</dbReference>
<dbReference type="PANTHER" id="PTHR30579:SF2">
    <property type="entry name" value="HTH-TYPE TRANSCRIPTIONAL REGULATOR ARGP"/>
    <property type="match status" value="1"/>
</dbReference>
<dbReference type="PANTHER" id="PTHR30579">
    <property type="entry name" value="TRANSCRIPTIONAL REGULATOR"/>
    <property type="match status" value="1"/>
</dbReference>
<dbReference type="Pfam" id="PF00126">
    <property type="entry name" value="HTH_1"/>
    <property type="match status" value="1"/>
</dbReference>
<dbReference type="Pfam" id="PF03466">
    <property type="entry name" value="LysR_substrate"/>
    <property type="match status" value="1"/>
</dbReference>
<dbReference type="PRINTS" id="PR00039">
    <property type="entry name" value="HTHLYSR"/>
</dbReference>
<dbReference type="SUPFAM" id="SSF53850">
    <property type="entry name" value="Periplasmic binding protein-like II"/>
    <property type="match status" value="1"/>
</dbReference>
<dbReference type="SUPFAM" id="SSF46785">
    <property type="entry name" value="Winged helix' DNA-binding domain"/>
    <property type="match status" value="1"/>
</dbReference>
<dbReference type="PROSITE" id="PS50931">
    <property type="entry name" value="HTH_LYSR"/>
    <property type="match status" value="1"/>
</dbReference>